<feature type="chain" id="PRO_0000257501" description="Putative pre-16S rRNA nuclease">
    <location>
        <begin position="1"/>
        <end position="137"/>
    </location>
</feature>
<keyword id="KW-0963">Cytoplasm</keyword>
<keyword id="KW-0378">Hydrolase</keyword>
<keyword id="KW-0540">Nuclease</keyword>
<keyword id="KW-1185">Reference proteome</keyword>
<keyword id="KW-0690">Ribosome biogenesis</keyword>
<comment type="function">
    <text evidence="1">Could be a nuclease involved in processing of the 5'-end of pre-16S rRNA.</text>
</comment>
<comment type="subcellular location">
    <subcellularLocation>
        <location evidence="1">Cytoplasm</location>
    </subcellularLocation>
</comment>
<comment type="similarity">
    <text evidence="1">Belongs to the YqgF nuclease family.</text>
</comment>
<sequence>MRTLGVDLGRVRIGLAVADEILRTARAVTTVVRRGEAEDLAAIAEVARDYEVTRAVVGLPLNMDGTEGPSARLARGFAPRLEAALGVPVELFDERLSSFEAESRLRARGVSARDQRGQVDAEAAAVILQGWLDRRAP</sequence>
<reference key="1">
    <citation type="submission" date="2006-01" db="EMBL/GenBank/DDBJ databases">
        <title>Complete sequence of Anaeromyxobacter dehalogenans 2CP-C.</title>
        <authorList>
            <person name="Copeland A."/>
            <person name="Lucas S."/>
            <person name="Lapidus A."/>
            <person name="Barry K."/>
            <person name="Detter J.C."/>
            <person name="Glavina T."/>
            <person name="Hammon N."/>
            <person name="Israni S."/>
            <person name="Pitluck S."/>
            <person name="Brettin T."/>
            <person name="Bruce D."/>
            <person name="Han C."/>
            <person name="Tapia R."/>
            <person name="Gilna P."/>
            <person name="Kiss H."/>
            <person name="Schmutz J."/>
            <person name="Larimer F."/>
            <person name="Land M."/>
            <person name="Kyrpides N."/>
            <person name="Anderson I."/>
            <person name="Sanford R.A."/>
            <person name="Ritalahti K.M."/>
            <person name="Thomas H.S."/>
            <person name="Kirby J.R."/>
            <person name="Zhulin I.B."/>
            <person name="Loeffler F.E."/>
            <person name="Richardson P."/>
        </authorList>
    </citation>
    <scope>NUCLEOTIDE SEQUENCE [LARGE SCALE GENOMIC DNA]</scope>
    <source>
        <strain>2CP-C</strain>
    </source>
</reference>
<protein>
    <recommendedName>
        <fullName evidence="1">Putative pre-16S rRNA nuclease</fullName>
        <ecNumber evidence="1">3.1.-.-</ecNumber>
    </recommendedName>
</protein>
<accession>Q2IQC1</accession>
<organism>
    <name type="scientific">Anaeromyxobacter dehalogenans (strain 2CP-C)</name>
    <dbReference type="NCBI Taxonomy" id="290397"/>
    <lineage>
        <taxon>Bacteria</taxon>
        <taxon>Pseudomonadati</taxon>
        <taxon>Myxococcota</taxon>
        <taxon>Myxococcia</taxon>
        <taxon>Myxococcales</taxon>
        <taxon>Cystobacterineae</taxon>
        <taxon>Anaeromyxobacteraceae</taxon>
        <taxon>Anaeromyxobacter</taxon>
    </lineage>
</organism>
<proteinExistence type="inferred from homology"/>
<name>YQGF_ANADE</name>
<gene>
    <name type="ordered locus">Adeh_1232</name>
</gene>
<evidence type="ECO:0000255" key="1">
    <source>
        <dbReference type="HAMAP-Rule" id="MF_00651"/>
    </source>
</evidence>
<dbReference type="EC" id="3.1.-.-" evidence="1"/>
<dbReference type="EMBL" id="CP000251">
    <property type="protein sequence ID" value="ABC81006.1"/>
    <property type="molecule type" value="Genomic_DNA"/>
</dbReference>
<dbReference type="RefSeq" id="WP_011420289.1">
    <property type="nucleotide sequence ID" value="NC_007760.1"/>
</dbReference>
<dbReference type="SMR" id="Q2IQC1"/>
<dbReference type="STRING" id="290397.Adeh_1232"/>
<dbReference type="KEGG" id="ade:Adeh_1232"/>
<dbReference type="eggNOG" id="COG0816">
    <property type="taxonomic scope" value="Bacteria"/>
</dbReference>
<dbReference type="HOGENOM" id="CLU_098240_2_0_7"/>
<dbReference type="OrthoDB" id="9796140at2"/>
<dbReference type="Proteomes" id="UP000001935">
    <property type="component" value="Chromosome"/>
</dbReference>
<dbReference type="GO" id="GO:0005829">
    <property type="term" value="C:cytosol"/>
    <property type="evidence" value="ECO:0007669"/>
    <property type="project" value="TreeGrafter"/>
</dbReference>
<dbReference type="GO" id="GO:0004518">
    <property type="term" value="F:nuclease activity"/>
    <property type="evidence" value="ECO:0007669"/>
    <property type="project" value="UniProtKB-KW"/>
</dbReference>
<dbReference type="GO" id="GO:0000967">
    <property type="term" value="P:rRNA 5'-end processing"/>
    <property type="evidence" value="ECO:0007669"/>
    <property type="project" value="UniProtKB-UniRule"/>
</dbReference>
<dbReference type="CDD" id="cd16964">
    <property type="entry name" value="YqgF"/>
    <property type="match status" value="1"/>
</dbReference>
<dbReference type="Gene3D" id="3.30.420.140">
    <property type="entry name" value="YqgF/RNase H-like domain"/>
    <property type="match status" value="1"/>
</dbReference>
<dbReference type="HAMAP" id="MF_00651">
    <property type="entry name" value="Nuclease_YqgF"/>
    <property type="match status" value="1"/>
</dbReference>
<dbReference type="InterPro" id="IPR012337">
    <property type="entry name" value="RNaseH-like_sf"/>
</dbReference>
<dbReference type="InterPro" id="IPR005227">
    <property type="entry name" value="YqgF"/>
</dbReference>
<dbReference type="InterPro" id="IPR006641">
    <property type="entry name" value="YqgF/RNaseH-like_dom"/>
</dbReference>
<dbReference type="InterPro" id="IPR037027">
    <property type="entry name" value="YqgF/RNaseH-like_dom_sf"/>
</dbReference>
<dbReference type="NCBIfam" id="TIGR00250">
    <property type="entry name" value="RNAse_H_YqgF"/>
    <property type="match status" value="1"/>
</dbReference>
<dbReference type="PANTHER" id="PTHR33317">
    <property type="entry name" value="POLYNUCLEOTIDYL TRANSFERASE, RIBONUCLEASE H-LIKE SUPERFAMILY PROTEIN"/>
    <property type="match status" value="1"/>
</dbReference>
<dbReference type="PANTHER" id="PTHR33317:SF4">
    <property type="entry name" value="POLYNUCLEOTIDYL TRANSFERASE, RIBONUCLEASE H-LIKE SUPERFAMILY PROTEIN"/>
    <property type="match status" value="1"/>
</dbReference>
<dbReference type="Pfam" id="PF03652">
    <property type="entry name" value="RuvX"/>
    <property type="match status" value="1"/>
</dbReference>
<dbReference type="SMART" id="SM00732">
    <property type="entry name" value="YqgFc"/>
    <property type="match status" value="1"/>
</dbReference>
<dbReference type="SUPFAM" id="SSF53098">
    <property type="entry name" value="Ribonuclease H-like"/>
    <property type="match status" value="1"/>
</dbReference>